<accession>Q8N0S2</accession>
<accession>B2RC80</accession>
<accession>Q9BWU3</accession>
<accession>Q9BWU4</accession>
<sequence length="351" mass="39699">MAGRSLTSKAEPTAGAVDRAEKAGGQDTSSQKIEDLMEMVQKLQKVGSLEPRVEVLINRINEVQQAKKKANKDLGEARTICEALQKELDSLHGEKVHLKEILSKKQETLRILRLHCQEKESEAHRKHTMLQECKERISALNLQIEEEKNKQRQLRLAFEEQLEDLMGQHKDLWDFHMPERLAKEICALDSSKEQLLKEEKLVKATLEDVKHQLCSLCGAEGPSTLDEGLFLRSQEAAATVQLFQEEHRKAEELLAAAAQRHQQLQQKCQQQQQKRQRLKEELEKHGMQVPAQAQSTQEEEAGPGDVASPKPLKGERPGAAHQAGPDVLIGQEDTLHPDLSPRGFQEIKELF</sequence>
<comment type="function">
    <text evidence="1">Major component of the transverse central element of synaptonemal complexes (SCS), formed between homologous chromosomes during meiotic prophase. Requires SYCP1 in order to be incorporated into the central element. May have a role in the synaptonemal complex assembly, stabilization and recombination.</text>
</comment>
<comment type="subunit">
    <text evidence="1">Homodimer. Found in a complex with SYCP1 and SYCE2. Interacts with SYCP1, SYCE2 and SYCE3. Interacts with SIX6OS1.</text>
</comment>
<comment type="interaction">
    <interactant intactId="EBI-6872807">
        <id>Q8N0S2</id>
    </interactant>
    <interactant intactId="EBI-79934">
        <id>P09917</id>
        <label>ALOX5</label>
    </interactant>
    <organismsDiffer>false</organismsDiffer>
    <experiments>6</experiments>
</comment>
<comment type="interaction">
    <interactant intactId="EBI-6872807">
        <id>Q8N0S2</id>
    </interactant>
    <interactant intactId="EBI-745073">
        <id>Q9BXY8</id>
        <label>BEX2</label>
    </interactant>
    <organismsDiffer>false</organismsDiffer>
    <experiments>3</experiments>
</comment>
<comment type="interaction">
    <interactant intactId="EBI-6872807">
        <id>Q8N0S2</id>
    </interactant>
    <interactant intactId="EBI-10229433">
        <id>Q13515</id>
        <label>BFSP2</label>
    </interactant>
    <organismsDiffer>false</organismsDiffer>
    <experiments>11</experiments>
</comment>
<comment type="interaction">
    <interactant intactId="EBI-6872807">
        <id>Q8N0S2</id>
    </interactant>
    <interactant intactId="EBI-741724">
        <id>Q8NA61</id>
        <label>CBY2</label>
    </interactant>
    <organismsDiffer>false</organismsDiffer>
    <experiments>3</experiments>
</comment>
<comment type="interaction">
    <interactant intactId="EBI-6872807">
        <id>Q8N0S2</id>
    </interactant>
    <interactant intactId="EBI-11524851">
        <id>Q8NA61-2</id>
        <label>CBY2</label>
    </interactant>
    <organismsDiffer>false</organismsDiffer>
    <experiments>7</experiments>
</comment>
<comment type="interaction">
    <interactant intactId="EBI-6872807">
        <id>Q8N0S2</id>
    </interactant>
    <interactant intactId="EBI-10171570">
        <id>Q68D86</id>
        <label>CCDC102B</label>
    </interactant>
    <organismsDiffer>false</organismsDiffer>
    <experiments>3</experiments>
</comment>
<comment type="interaction">
    <interactant intactId="EBI-6872807">
        <id>Q8N0S2</id>
    </interactant>
    <interactant intactId="EBI-10175300">
        <id>Q8TD31-3</id>
        <label>CCHCR1</label>
    </interactant>
    <organismsDiffer>false</organismsDiffer>
    <experiments>3</experiments>
</comment>
<comment type="interaction">
    <interactant intactId="EBI-6872807">
        <id>Q8N0S2</id>
    </interactant>
    <interactant intactId="EBI-11953200">
        <id>Q494V2-2</id>
        <label>CFAP100</label>
    </interactant>
    <organismsDiffer>false</organismsDiffer>
    <experiments>3</experiments>
</comment>
<comment type="interaction">
    <interactant intactId="EBI-6872807">
        <id>Q8N0S2</id>
    </interactant>
    <interactant intactId="EBI-739784">
        <id>Q9BW66</id>
        <label>CINP</label>
    </interactant>
    <organismsDiffer>false</organismsDiffer>
    <experiments>3</experiments>
</comment>
<comment type="interaction">
    <interactant intactId="EBI-6872807">
        <id>Q8N0S2</id>
    </interactant>
    <interactant intactId="EBI-741648">
        <id>O43739</id>
        <label>CYTH3</label>
    </interactant>
    <organismsDiffer>false</organismsDiffer>
    <experiments>4</experiments>
</comment>
<comment type="interaction">
    <interactant intactId="EBI-6872807">
        <id>Q8N0S2</id>
    </interactant>
    <interactant intactId="EBI-10240074">
        <id>Q3B7T1-5</id>
        <label>EDRF1</label>
    </interactant>
    <organismsDiffer>false</organismsDiffer>
    <experiments>3</experiments>
</comment>
<comment type="interaction">
    <interactant intactId="EBI-6872807">
        <id>Q8N0S2</id>
    </interactant>
    <interactant intactId="EBI-742102">
        <id>Q8IYI6</id>
        <label>EXOC8</label>
    </interactant>
    <organismsDiffer>false</organismsDiffer>
    <experiments>3</experiments>
</comment>
<comment type="interaction">
    <interactant intactId="EBI-6872807">
        <id>Q8N0S2</id>
    </interactant>
    <interactant intactId="EBI-719941">
        <id>Q3B820</id>
        <label>FAM161A</label>
    </interactant>
    <organismsDiffer>false</organismsDiffer>
    <experiments>3</experiments>
</comment>
<comment type="interaction">
    <interactant intactId="EBI-6872807">
        <id>Q8N0S2</id>
    </interactant>
    <interactant intactId="EBI-7225287">
        <id>Q96MY7</id>
        <label>FAM161B</label>
    </interactant>
    <organismsDiffer>false</organismsDiffer>
    <experiments>4</experiments>
</comment>
<comment type="interaction">
    <interactant intactId="EBI-6872807">
        <id>Q8N0S2</id>
    </interactant>
    <interactant intactId="EBI-2514791">
        <id>Q96CS2</id>
        <label>HAUS1</label>
    </interactant>
    <organismsDiffer>false</organismsDiffer>
    <experiments>3</experiments>
</comment>
<comment type="interaction">
    <interactant intactId="EBI-6872807">
        <id>Q8N0S2</id>
    </interactant>
    <interactant intactId="EBI-713401">
        <id>Q9P0W2</id>
        <label>HMG20B</label>
    </interactant>
    <organismsDiffer>false</organismsDiffer>
    <experiments>3</experiments>
</comment>
<comment type="interaction">
    <interactant intactId="EBI-6872807">
        <id>Q8N0S2</id>
    </interactant>
    <interactant intactId="EBI-746704">
        <id>Q9UJC3</id>
        <label>HOOK1</label>
    </interactant>
    <organismsDiffer>false</organismsDiffer>
    <experiments>4</experiments>
</comment>
<comment type="interaction">
    <interactant intactId="EBI-6872807">
        <id>Q8N0S2</id>
    </interactant>
    <interactant intactId="EBI-739361">
        <id>Q9UBY9</id>
        <label>HSPB7</label>
    </interactant>
    <organismsDiffer>false</organismsDiffer>
    <experiments>3</experiments>
</comment>
<comment type="interaction">
    <interactant intactId="EBI-6872807">
        <id>Q8N0S2</id>
    </interactant>
    <interactant intactId="EBI-10220600">
        <id>Q8NA54</id>
        <label>IQUB</label>
    </interactant>
    <organismsDiffer>false</organismsDiffer>
    <experiments>3</experiments>
</comment>
<comment type="interaction">
    <interactant intactId="EBI-6872807">
        <id>Q8N0S2</id>
    </interactant>
    <interactant intactId="EBI-399080">
        <id>Q92993</id>
        <label>KAT5</label>
    </interactant>
    <organismsDiffer>false</organismsDiffer>
    <experiments>3</experiments>
</comment>
<comment type="interaction">
    <interactant intactId="EBI-6872807">
        <id>Q8N0S2</id>
    </interactant>
    <interactant intactId="EBI-2125614">
        <id>Q9BVG8</id>
        <label>KIFC3</label>
    </interactant>
    <organismsDiffer>false</organismsDiffer>
    <experiments>3</experiments>
</comment>
<comment type="interaction">
    <interactant intactId="EBI-6872807">
        <id>Q8N0S2</id>
    </interactant>
    <interactant intactId="EBI-297888">
        <id>P05783</id>
        <label>KRT18</label>
    </interactant>
    <organismsDiffer>false</organismsDiffer>
    <experiments>3</experiments>
</comment>
<comment type="interaction">
    <interactant intactId="EBI-6872807">
        <id>Q8N0S2</id>
    </interactant>
    <interactant intactId="EBI-351953">
        <id>P02545-2</id>
        <label>LMNA</label>
    </interactant>
    <organismsDiffer>false</organismsDiffer>
    <experiments>3</experiments>
</comment>
<comment type="interaction">
    <interactant intactId="EBI-6872807">
        <id>Q8N0S2</id>
    </interactant>
    <interactant intactId="EBI-2513996">
        <id>Q86WA8</id>
        <label>LONP2</label>
    </interactant>
    <organismsDiffer>false</organismsDiffer>
    <experiments>3</experiments>
</comment>
<comment type="interaction">
    <interactant intactId="EBI-6872807">
        <id>Q8N0S2</id>
    </interactant>
    <interactant intactId="EBI-11978579">
        <id>O95983-2</id>
        <label>MBD3</label>
    </interactant>
    <organismsDiffer>false</organismsDiffer>
    <experiments>3</experiments>
</comment>
<comment type="interaction">
    <interactant intactId="EBI-6872807">
        <id>Q8N0S2</id>
    </interactant>
    <interactant intactId="EBI-16440286">
        <id>B5MC10</id>
        <label>MPV17</label>
    </interactant>
    <organismsDiffer>false</organismsDiffer>
    <experiments>4</experiments>
</comment>
<comment type="interaction">
    <interactant intactId="EBI-6872807">
        <id>Q8N0S2</id>
    </interactant>
    <interactant intactId="EBI-748896">
        <id>Q96HT8</id>
        <label>MRFAP1L1</label>
    </interactant>
    <organismsDiffer>false</organismsDiffer>
    <experiments>3</experiments>
</comment>
<comment type="interaction">
    <interactant intactId="EBI-6872807">
        <id>Q8N0S2</id>
    </interactant>
    <interactant intactId="EBI-744782">
        <id>Q9Y5B8</id>
        <label>NME7</label>
    </interactant>
    <organismsDiffer>false</organismsDiffer>
    <experiments>6</experiments>
</comment>
<comment type="interaction">
    <interactant intactId="EBI-6872807">
        <id>Q8N0S2</id>
    </interactant>
    <interactant intactId="EBI-16430249">
        <id>A0A0S2Z528</id>
        <label>PSTPIP1</label>
    </interactant>
    <organismsDiffer>false</organismsDiffer>
    <experiments>3</experiments>
</comment>
<comment type="interaction">
    <interactant intactId="EBI-6872807">
        <id>Q8N0S2</id>
    </interactant>
    <interactant intactId="EBI-749285">
        <id>Q15311</id>
        <label>RALBP1</label>
    </interactant>
    <organismsDiffer>false</organismsDiffer>
    <experiments>3</experiments>
</comment>
<comment type="interaction">
    <interactant intactId="EBI-6872807">
        <id>Q8N0S2</id>
    </interactant>
    <interactant intactId="EBI-2340624">
        <id>Q9BYM8</id>
        <label>RBCK1</label>
    </interactant>
    <organismsDiffer>false</organismsDiffer>
    <experiments>3</experiments>
</comment>
<comment type="interaction">
    <interactant intactId="EBI-6872807">
        <id>Q8N0S2</id>
    </interactant>
    <interactant intactId="EBI-11984663">
        <id>Q06455-2</id>
        <label>RUNX1T1</label>
    </interactant>
    <organismsDiffer>false</organismsDiffer>
    <experiments>3</experiments>
</comment>
<comment type="interaction">
    <interactant intactId="EBI-6872807">
        <id>Q8N0S2</id>
    </interactant>
    <interactant intactId="EBI-748391">
        <id>Q9BWG6</id>
        <label>SCNM1</label>
    </interactant>
    <organismsDiffer>false</organismsDiffer>
    <experiments>3</experiments>
</comment>
<comment type="interaction">
    <interactant intactId="EBI-6872807">
        <id>Q8N0S2</id>
    </interactant>
    <interactant intactId="EBI-741854">
        <id>Q96BD8</id>
        <label>SKA1</label>
    </interactant>
    <organismsDiffer>false</organismsDiffer>
    <experiments>3</experiments>
</comment>
<comment type="interaction">
    <interactant intactId="EBI-6872807">
        <id>Q8N0S2</id>
    </interactant>
    <interactant intactId="EBI-455078">
        <id>Q969G3</id>
        <label>SMARCE1</label>
    </interactant>
    <organismsDiffer>false</organismsDiffer>
    <experiments>3</experiments>
</comment>
<comment type="interaction">
    <interactant intactId="EBI-6872807">
        <id>Q8N0S2</id>
    </interactant>
    <interactant intactId="EBI-11995806">
        <id>Q9H0A9-2</id>
        <label>SPATC1L</label>
    </interactant>
    <organismsDiffer>false</organismsDiffer>
    <experiments>3</experiments>
</comment>
<comment type="interaction">
    <interactant intactId="EBI-6872807">
        <id>Q8N0S2</id>
    </interactant>
    <interactant intactId="EBI-2210673">
        <id>Q16385</id>
        <label>SSX2B</label>
    </interactant>
    <organismsDiffer>false</organismsDiffer>
    <experiments>3</experiments>
</comment>
<comment type="interaction">
    <interactant intactId="EBI-6872807">
        <id>Q8N0S2</id>
    </interactant>
    <interactant intactId="EBI-8484990">
        <id>Q8N4C7</id>
        <label>STX19</label>
    </interactant>
    <organismsDiffer>false</organismsDiffer>
    <experiments>3</experiments>
</comment>
<comment type="interaction">
    <interactant intactId="EBI-6872807">
        <id>Q8N0S2</id>
    </interactant>
    <interactant intactId="EBI-351158">
        <id>P09493</id>
        <label>TPM1</label>
    </interactant>
    <organismsDiffer>false</organismsDiffer>
    <experiments>4</experiments>
</comment>
<comment type="interaction">
    <interactant intactId="EBI-6872807">
        <id>Q8N0S2</id>
    </interactant>
    <interactant intactId="EBI-10196387">
        <id>P09493-5</id>
        <label>TPM1</label>
    </interactant>
    <organismsDiffer>false</organismsDiffer>
    <experiments>3</experiments>
</comment>
<comment type="interaction">
    <interactant intactId="EBI-6872807">
        <id>Q8N0S2</id>
    </interactant>
    <interactant intactId="EBI-12123928">
        <id>P09493-10</id>
        <label>TPM1</label>
    </interactant>
    <organismsDiffer>false</organismsDiffer>
    <experiments>4</experiments>
</comment>
<comment type="interaction">
    <interactant intactId="EBI-6872807">
        <id>Q8N0S2</id>
    </interactant>
    <interactant intactId="EBI-355607">
        <id>P06753</id>
        <label>TPM3</label>
    </interactant>
    <organismsDiffer>false</organismsDiffer>
    <experiments>7</experiments>
</comment>
<comment type="interaction">
    <interactant intactId="EBI-6872807">
        <id>Q8N0S2</id>
    </interactant>
    <interactant intactId="EBI-10184033">
        <id>Q5VU62</id>
        <label>TPM3</label>
    </interactant>
    <organismsDiffer>false</organismsDiffer>
    <experiments>3</experiments>
</comment>
<comment type="interaction">
    <interactant intactId="EBI-6872807">
        <id>Q8N0S2</id>
    </interactant>
    <interactant intactId="EBI-359224">
        <id>Q13077</id>
        <label>TRAF1</label>
    </interactant>
    <organismsDiffer>false</organismsDiffer>
    <experiments>3</experiments>
</comment>
<comment type="interaction">
    <interactant intactId="EBI-6872807">
        <id>Q8N0S2</id>
    </interactant>
    <interactant intactId="EBI-725997">
        <id>Q8WV44</id>
        <label>TRIM41</label>
    </interactant>
    <organismsDiffer>false</organismsDiffer>
    <experiments>3</experiments>
</comment>
<comment type="interaction">
    <interactant intactId="EBI-6872807">
        <id>Q8N0S2</id>
    </interactant>
    <interactant intactId="EBI-346882">
        <id>Q99816</id>
        <label>TSG101</label>
    </interactant>
    <organismsDiffer>false</organismsDiffer>
    <experiments>6</experiments>
</comment>
<comment type="interaction">
    <interactant intactId="EBI-6872807">
        <id>Q8N0S2</id>
    </interactant>
    <interactant intactId="EBI-2932492">
        <id>Q99757</id>
        <label>TXN2</label>
    </interactant>
    <organismsDiffer>false</organismsDiffer>
    <experiments>3</experiments>
</comment>
<comment type="interaction">
    <interactant intactId="EBI-6872807">
        <id>Q8N0S2</id>
    </interactant>
    <interactant intactId="EBI-741945">
        <id>Q9BRG1</id>
        <label>VPS25</label>
    </interactant>
    <organismsDiffer>false</organismsDiffer>
    <experiments>3</experiments>
</comment>
<comment type="interaction">
    <interactant intactId="EBI-6872807">
        <id>Q8N0S2</id>
    </interactant>
    <interactant intactId="EBI-712969">
        <id>Q9Y3C0</id>
        <label>WASHC3</label>
    </interactant>
    <organismsDiffer>false</organismsDiffer>
    <experiments>4</experiments>
</comment>
<comment type="interaction">
    <interactant intactId="EBI-6872807">
        <id>Q8N0S2</id>
    </interactant>
    <interactant intactId="EBI-2555767">
        <id>Q15973</id>
        <label>ZNF124</label>
    </interactant>
    <organismsDiffer>false</organismsDiffer>
    <experiments>3</experiments>
</comment>
<comment type="interaction">
    <interactant intactId="EBI-6872807">
        <id>Q8N0S2</id>
    </interactant>
    <interactant intactId="EBI-25492395">
        <id>PRO_0000449633</id>
        <label>rep</label>
        <dbReference type="UniProtKB" id="P0DTD1"/>
    </interactant>
    <organismsDiffer>true</organismsDiffer>
    <experiments>3</experiments>
</comment>
<comment type="subcellular location">
    <subcellularLocation>
        <location evidence="1">Nucleus</location>
    </subcellularLocation>
    <subcellularLocation>
        <location evidence="1">Chromosome</location>
    </subcellularLocation>
    <text evidence="1">Associates with chromatin. In prophase I stage of meiosis, localizes in the transverse central elements of the central region between lateral elements of the synaptonemal complexes. Found only where the chromosome cores are synapsed. Colocalizes with SYCE2 in the central elements.</text>
</comment>
<comment type="alternative products">
    <event type="alternative splicing"/>
    <isoform>
        <id>Q8N0S2-1</id>
        <name>1</name>
        <sequence type="displayed"/>
    </isoform>
    <isoform>
        <id>Q8N0S2-2</id>
        <name>2</name>
        <sequence type="described" ref="VSP_021691 VSP_021692"/>
    </isoform>
    <isoform>
        <id>Q8N0S2-3</id>
        <name>3</name>
        <sequence type="described" ref="VSP_021690 VSP_021692"/>
    </isoform>
</comment>
<comment type="disease" evidence="5">
    <disease id="DI-04723">
        <name>Premature ovarian failure 12</name>
        <acronym>POF12</acronym>
        <description>An ovarian disorder defined as the cessation of ovarian function under the age of 40 years. It is characterized by oligomenorrhea or amenorrhea, in the presence of elevated levels of serum gonadotropins and low estradiol.</description>
        <dbReference type="MIM" id="616947"/>
    </disease>
    <text>The disease is caused by variants affecting the gene represented in this entry.</text>
</comment>
<comment type="disease" evidence="6">
    <disease id="DI-04721">
        <name>Spermatogenic failure, 15</name>
        <acronym>SPGF15</acronym>
        <description>An infertility disorder caused by spermatogenesis defects and characterized by non-obstructive azoospermia due to complete meiotic maturation arrest. SPGF15 inheritance is autosomal recessive.</description>
        <dbReference type="MIM" id="616950"/>
    </disease>
    <text>The disease is caused by variants affecting the gene represented in this entry.</text>
</comment>
<comment type="similarity">
    <text evidence="9">Belongs to the SYCE family.</text>
</comment>
<comment type="sequence caution" evidence="9">
    <conflict type="erroneous initiation">
        <sequence resource="EMBL-CDS" id="AAH34821"/>
    </conflict>
    <text>Truncated N-terminus.</text>
</comment>
<proteinExistence type="evidence at protein level"/>
<protein>
    <recommendedName>
        <fullName>Synaptonemal complex central element protein 1</fullName>
    </recommendedName>
    <alternativeName>
        <fullName>Cancer/testis antigen 76</fullName>
        <shortName>CT76</shortName>
    </alternativeName>
</protein>
<organism>
    <name type="scientific">Homo sapiens</name>
    <name type="common">Human</name>
    <dbReference type="NCBI Taxonomy" id="9606"/>
    <lineage>
        <taxon>Eukaryota</taxon>
        <taxon>Metazoa</taxon>
        <taxon>Chordata</taxon>
        <taxon>Craniata</taxon>
        <taxon>Vertebrata</taxon>
        <taxon>Euteleostomi</taxon>
        <taxon>Mammalia</taxon>
        <taxon>Eutheria</taxon>
        <taxon>Euarchontoglires</taxon>
        <taxon>Primates</taxon>
        <taxon>Haplorrhini</taxon>
        <taxon>Catarrhini</taxon>
        <taxon>Hominidae</taxon>
        <taxon>Homo</taxon>
    </lineage>
</organism>
<name>SYCE1_HUMAN</name>
<feature type="chain" id="PRO_0000261426" description="Synaptonemal complex central element protein 1">
    <location>
        <begin position="1"/>
        <end position="351"/>
    </location>
</feature>
<feature type="region of interest" description="Disordered" evidence="3">
    <location>
        <begin position="1"/>
        <end position="31"/>
    </location>
</feature>
<feature type="region of interest" description="Disordered" evidence="3">
    <location>
        <begin position="267"/>
        <end position="351"/>
    </location>
</feature>
<feature type="coiled-coil region" evidence="2">
    <location>
        <begin position="52"/>
        <end position="290"/>
    </location>
</feature>
<feature type="compositionally biased region" description="Polar residues" evidence="3">
    <location>
        <begin position="1"/>
        <end position="10"/>
    </location>
</feature>
<feature type="splice variant" id="VSP_021690" description="In isoform 3." evidence="7">
    <location>
        <begin position="1"/>
        <end position="128"/>
    </location>
</feature>
<feature type="splice variant" id="VSP_021691" description="In isoform 2." evidence="7 8">
    <location>
        <begin position="1"/>
        <end position="36"/>
    </location>
</feature>
<feature type="splice variant" id="VSP_021692" description="In isoform 2 and isoform 3." evidence="7 8">
    <original>SPKPLKGERPGAAHQAGPDVLIGQEDTLHPDLSPRGFQEIKELF</original>
    <variation>PRPGRPVTWWS</variation>
    <location>
        <begin position="308"/>
        <end position="351"/>
    </location>
</feature>
<feature type="sequence variant" id="VAR_029385" description="In dbSNP:rs8181357." evidence="4">
    <original>E</original>
    <variation>D</variation>
    <location>
        <position position="132"/>
    </location>
</feature>
<feature type="sequence variant" id="VAR_029386" description="In dbSNP:rs3747881." evidence="4">
    <original>K</original>
    <variation>R</variation>
    <location>
        <position position="183"/>
    </location>
</feature>
<feature type="sequence variant" id="VAR_029387" description="In dbSNP:rs1313001903.">
    <original>P</original>
    <variation>A</variation>
    <location>
        <position position="317"/>
    </location>
</feature>
<feature type="sequence conflict" description="In Ref. 5; AAH34821." evidence="9" ref="5">
    <original>H</original>
    <variation>R</variation>
    <location>
        <position position="321"/>
    </location>
</feature>
<dbReference type="EMBL" id="AY027807">
    <property type="protein sequence ID" value="AAK14796.1"/>
    <property type="molecule type" value="mRNA"/>
</dbReference>
<dbReference type="EMBL" id="AY027808">
    <property type="protein sequence ID" value="AAK14797.1"/>
    <property type="molecule type" value="mRNA"/>
</dbReference>
<dbReference type="EMBL" id="AY028079">
    <property type="protein sequence ID" value="AAK21976.1"/>
    <property type="molecule type" value="Genomic_DNA"/>
</dbReference>
<dbReference type="EMBL" id="AK314978">
    <property type="protein sequence ID" value="BAG37477.1"/>
    <property type="molecule type" value="mRNA"/>
</dbReference>
<dbReference type="EMBL" id="AL161645">
    <property type="status" value="NOT_ANNOTATED_CDS"/>
    <property type="molecule type" value="Genomic_DNA"/>
</dbReference>
<dbReference type="EMBL" id="CH471211">
    <property type="protein sequence ID" value="EAW61359.1"/>
    <property type="molecule type" value="Genomic_DNA"/>
</dbReference>
<dbReference type="EMBL" id="BC034821">
    <property type="protein sequence ID" value="AAH34821.1"/>
    <property type="status" value="ALT_INIT"/>
    <property type="molecule type" value="mRNA"/>
</dbReference>
<dbReference type="CCDS" id="CCDS7687.1">
    <molecule id="Q8N0S2-2"/>
</dbReference>
<dbReference type="RefSeq" id="NP_001137235.1">
    <property type="nucleotide sequence ID" value="NM_001143763.1"/>
</dbReference>
<dbReference type="RefSeq" id="NP_001137236.1">
    <molecule id="Q8N0S2-1"/>
    <property type="nucleotide sequence ID" value="NM_001143764.3"/>
</dbReference>
<dbReference type="RefSeq" id="NP_570140.1">
    <molecule id="Q8N0S2-2"/>
    <property type="nucleotide sequence ID" value="NM_130784.4"/>
</dbReference>
<dbReference type="SMR" id="Q8N0S2"/>
<dbReference type="BioGRID" id="125023">
    <property type="interactions" value="129"/>
</dbReference>
<dbReference type="ComplexPortal" id="CPX-2461">
    <property type="entry name" value="Synaptonemal complex"/>
</dbReference>
<dbReference type="FunCoup" id="Q8N0S2">
    <property type="interactions" value="39"/>
</dbReference>
<dbReference type="IntAct" id="Q8N0S2">
    <property type="interactions" value="125"/>
</dbReference>
<dbReference type="STRING" id="9606.ENSP00000303978"/>
<dbReference type="GlyGen" id="Q8N0S2">
    <property type="glycosylation" value="1 site, 1 O-linked glycan (1 site)"/>
</dbReference>
<dbReference type="iPTMnet" id="Q8N0S2"/>
<dbReference type="PhosphoSitePlus" id="Q8N0S2"/>
<dbReference type="BioMuta" id="SYCE1"/>
<dbReference type="DMDM" id="118573896"/>
<dbReference type="jPOST" id="Q8N0S2"/>
<dbReference type="MassIVE" id="Q8N0S2"/>
<dbReference type="PaxDb" id="9606-ENSP00000341282"/>
<dbReference type="PeptideAtlas" id="Q8N0S2"/>
<dbReference type="ProteomicsDB" id="71447">
    <molecule id="Q8N0S2-1"/>
</dbReference>
<dbReference type="ProteomicsDB" id="71448">
    <molecule id="Q8N0S2-2"/>
</dbReference>
<dbReference type="ProteomicsDB" id="71449">
    <molecule id="Q8N0S2-3"/>
</dbReference>
<dbReference type="Pumba" id="Q8N0S2"/>
<dbReference type="Antibodypedia" id="46492">
    <property type="antibodies" value="71 antibodies from 19 providers"/>
</dbReference>
<dbReference type="DNASU" id="93426"/>
<dbReference type="Ensembl" id="ENST00000343131.7">
    <molecule id="Q8N0S2-1"/>
    <property type="protein sequence ID" value="ENSP00000341282.5"/>
    <property type="gene ID" value="ENSG00000171772.17"/>
</dbReference>
<dbReference type="Ensembl" id="ENST00000368517.7">
    <molecule id="Q8N0S2-2"/>
    <property type="protein sequence ID" value="ENSP00000357503.3"/>
    <property type="gene ID" value="ENSG00000171772.17"/>
</dbReference>
<dbReference type="GeneID" id="93426"/>
<dbReference type="KEGG" id="hsa:93426"/>
<dbReference type="MANE-Select" id="ENST00000343131.7">
    <property type="protein sequence ID" value="ENSP00000341282.5"/>
    <property type="RefSeq nucleotide sequence ID" value="NM_001143764.3"/>
    <property type="RefSeq protein sequence ID" value="NP_001137236.1"/>
</dbReference>
<dbReference type="UCSC" id="uc001lno.2">
    <molecule id="Q8N0S2-1"/>
    <property type="organism name" value="human"/>
</dbReference>
<dbReference type="AGR" id="HGNC:28852"/>
<dbReference type="CTD" id="93426"/>
<dbReference type="DisGeNET" id="93426"/>
<dbReference type="GeneCards" id="SYCE1"/>
<dbReference type="HGNC" id="HGNC:28852">
    <property type="gene designation" value="SYCE1"/>
</dbReference>
<dbReference type="HPA" id="ENSG00000171772">
    <property type="expression patterns" value="Group enriched (brain, testis)"/>
</dbReference>
<dbReference type="MalaCards" id="SYCE1"/>
<dbReference type="MIM" id="611486">
    <property type="type" value="gene"/>
</dbReference>
<dbReference type="MIM" id="616947">
    <property type="type" value="phenotype"/>
</dbReference>
<dbReference type="MIM" id="616950">
    <property type="type" value="phenotype"/>
</dbReference>
<dbReference type="neXtProt" id="NX_Q8N0S2"/>
<dbReference type="OpenTargets" id="ENSG00000171772"/>
<dbReference type="Orphanet" id="399805">
    <property type="disease" value="Male infertility with azoospermia or oligozoospermia due to single gene mutation"/>
</dbReference>
<dbReference type="PharmGKB" id="PA134876767"/>
<dbReference type="VEuPathDB" id="HostDB:ENSG00000171772"/>
<dbReference type="eggNOG" id="ENOG502S24D">
    <property type="taxonomic scope" value="Eukaryota"/>
</dbReference>
<dbReference type="GeneTree" id="ENSGT00390000017352"/>
<dbReference type="HOGENOM" id="CLU_068366_0_0_1"/>
<dbReference type="InParanoid" id="Q8N0S2"/>
<dbReference type="OMA" id="EFHKPEQ"/>
<dbReference type="OrthoDB" id="8931744at2759"/>
<dbReference type="PAN-GO" id="Q8N0S2">
    <property type="GO annotations" value="1 GO annotation based on evolutionary models"/>
</dbReference>
<dbReference type="PhylomeDB" id="Q8N0S2"/>
<dbReference type="TreeFam" id="TF337303"/>
<dbReference type="PathwayCommons" id="Q8N0S2"/>
<dbReference type="Reactome" id="R-HSA-1221632">
    <property type="pathway name" value="Meiotic synapsis"/>
</dbReference>
<dbReference type="SignaLink" id="Q8N0S2"/>
<dbReference type="SIGNOR" id="Q8N0S2"/>
<dbReference type="BioGRID-ORCS" id="93426">
    <property type="hits" value="10 hits in 1150 CRISPR screens"/>
</dbReference>
<dbReference type="GenomeRNAi" id="93426"/>
<dbReference type="Pharos" id="Q8N0S2">
    <property type="development level" value="Tbio"/>
</dbReference>
<dbReference type="PRO" id="PR:Q8N0S2"/>
<dbReference type="Proteomes" id="UP000005640">
    <property type="component" value="Chromosome 10"/>
</dbReference>
<dbReference type="RNAct" id="Q8N0S2">
    <property type="molecule type" value="protein"/>
</dbReference>
<dbReference type="Bgee" id="ENSG00000171772">
    <property type="expression patterns" value="Expressed in right testis and 102 other cell types or tissues"/>
</dbReference>
<dbReference type="ExpressionAtlas" id="Q8N0S2">
    <property type="expression patterns" value="baseline and differential"/>
</dbReference>
<dbReference type="GO" id="GO:0000801">
    <property type="term" value="C:central element"/>
    <property type="evidence" value="ECO:0000250"/>
    <property type="project" value="HGNC-UCL"/>
</dbReference>
<dbReference type="GO" id="GO:0005694">
    <property type="term" value="C:chromosome"/>
    <property type="evidence" value="ECO:0000250"/>
    <property type="project" value="UniProtKB"/>
</dbReference>
<dbReference type="GO" id="GO:0000795">
    <property type="term" value="C:synaptonemal complex"/>
    <property type="evidence" value="ECO:0000318"/>
    <property type="project" value="GO_Central"/>
</dbReference>
<dbReference type="GO" id="GO:0051301">
    <property type="term" value="P:cell division"/>
    <property type="evidence" value="ECO:0007669"/>
    <property type="project" value="UniProtKB-KW"/>
</dbReference>
<dbReference type="GO" id="GO:0007130">
    <property type="term" value="P:synaptonemal complex assembly"/>
    <property type="evidence" value="ECO:0000305"/>
    <property type="project" value="BHF-UCL"/>
</dbReference>
<dbReference type="InterPro" id="IPR026676">
    <property type="entry name" value="SYCE1"/>
</dbReference>
<dbReference type="PANTHER" id="PTHR21731:SF0">
    <property type="entry name" value="SYNAPTONEMAL COMPLEX CENTRAL ELEMENT PROTEIN 1"/>
    <property type="match status" value="1"/>
</dbReference>
<dbReference type="PANTHER" id="PTHR21731">
    <property type="entry name" value="SYNAPTONEMAL COMPLEX CENTRAL ELEMENT PROTEIN 1-LIKE"/>
    <property type="match status" value="1"/>
</dbReference>
<dbReference type="Pfam" id="PF15233">
    <property type="entry name" value="SYCE1"/>
    <property type="match status" value="1"/>
</dbReference>
<gene>
    <name type="primary">SYCE1</name>
    <name type="synonym">C10orf94</name>
</gene>
<reference key="1">
    <citation type="journal article" date="2002" name="Genomics">
        <title>Genomic analysis of human chromosome 10q and 4q telomeres suggests a common origin.</title>
        <authorList>
            <person name="van Geel M."/>
            <person name="Dickson M.C."/>
            <person name="Beck A.F."/>
            <person name="Bolland D.J."/>
            <person name="Frants R.R."/>
            <person name="van der Maarel S.M."/>
            <person name="de Jong P.J."/>
            <person name="Hewitt J.E."/>
        </authorList>
    </citation>
    <scope>NUCLEOTIDE SEQUENCE [MRNA] (ISOFORMS 2 AND 3)</scope>
    <source>
        <tissue>Fetal brain</tissue>
    </source>
</reference>
<reference key="2">
    <citation type="journal article" date="2004" name="Nat. Genet.">
        <title>Complete sequencing and characterization of 21,243 full-length human cDNAs.</title>
        <authorList>
            <person name="Ota T."/>
            <person name="Suzuki Y."/>
            <person name="Nishikawa T."/>
            <person name="Otsuki T."/>
            <person name="Sugiyama T."/>
            <person name="Irie R."/>
            <person name="Wakamatsu A."/>
            <person name="Hayashi K."/>
            <person name="Sato H."/>
            <person name="Nagai K."/>
            <person name="Kimura K."/>
            <person name="Makita H."/>
            <person name="Sekine M."/>
            <person name="Obayashi M."/>
            <person name="Nishi T."/>
            <person name="Shibahara T."/>
            <person name="Tanaka T."/>
            <person name="Ishii S."/>
            <person name="Yamamoto J."/>
            <person name="Saito K."/>
            <person name="Kawai Y."/>
            <person name="Isono Y."/>
            <person name="Nakamura Y."/>
            <person name="Nagahari K."/>
            <person name="Murakami K."/>
            <person name="Yasuda T."/>
            <person name="Iwayanagi T."/>
            <person name="Wagatsuma M."/>
            <person name="Shiratori A."/>
            <person name="Sudo H."/>
            <person name="Hosoiri T."/>
            <person name="Kaku Y."/>
            <person name="Kodaira H."/>
            <person name="Kondo H."/>
            <person name="Sugawara M."/>
            <person name="Takahashi M."/>
            <person name="Kanda K."/>
            <person name="Yokoi T."/>
            <person name="Furuya T."/>
            <person name="Kikkawa E."/>
            <person name="Omura Y."/>
            <person name="Abe K."/>
            <person name="Kamihara K."/>
            <person name="Katsuta N."/>
            <person name="Sato K."/>
            <person name="Tanikawa M."/>
            <person name="Yamazaki M."/>
            <person name="Ninomiya K."/>
            <person name="Ishibashi T."/>
            <person name="Yamashita H."/>
            <person name="Murakawa K."/>
            <person name="Fujimori K."/>
            <person name="Tanai H."/>
            <person name="Kimata M."/>
            <person name="Watanabe M."/>
            <person name="Hiraoka S."/>
            <person name="Chiba Y."/>
            <person name="Ishida S."/>
            <person name="Ono Y."/>
            <person name="Takiguchi S."/>
            <person name="Watanabe S."/>
            <person name="Yosida M."/>
            <person name="Hotuta T."/>
            <person name="Kusano J."/>
            <person name="Kanehori K."/>
            <person name="Takahashi-Fujii A."/>
            <person name="Hara H."/>
            <person name="Tanase T.-O."/>
            <person name="Nomura Y."/>
            <person name="Togiya S."/>
            <person name="Komai F."/>
            <person name="Hara R."/>
            <person name="Takeuchi K."/>
            <person name="Arita M."/>
            <person name="Imose N."/>
            <person name="Musashino K."/>
            <person name="Yuuki H."/>
            <person name="Oshima A."/>
            <person name="Sasaki N."/>
            <person name="Aotsuka S."/>
            <person name="Yoshikawa Y."/>
            <person name="Matsunawa H."/>
            <person name="Ichihara T."/>
            <person name="Shiohata N."/>
            <person name="Sano S."/>
            <person name="Moriya S."/>
            <person name="Momiyama H."/>
            <person name="Satoh N."/>
            <person name="Takami S."/>
            <person name="Terashima Y."/>
            <person name="Suzuki O."/>
            <person name="Nakagawa S."/>
            <person name="Senoh A."/>
            <person name="Mizoguchi H."/>
            <person name="Goto Y."/>
            <person name="Shimizu F."/>
            <person name="Wakebe H."/>
            <person name="Hishigaki H."/>
            <person name="Watanabe T."/>
            <person name="Sugiyama A."/>
            <person name="Takemoto M."/>
            <person name="Kawakami B."/>
            <person name="Yamazaki M."/>
            <person name="Watanabe K."/>
            <person name="Kumagai A."/>
            <person name="Itakura S."/>
            <person name="Fukuzumi Y."/>
            <person name="Fujimori Y."/>
            <person name="Komiyama M."/>
            <person name="Tashiro H."/>
            <person name="Tanigami A."/>
            <person name="Fujiwara T."/>
            <person name="Ono T."/>
            <person name="Yamada K."/>
            <person name="Fujii Y."/>
            <person name="Ozaki K."/>
            <person name="Hirao M."/>
            <person name="Ohmori Y."/>
            <person name="Kawabata A."/>
            <person name="Hikiji T."/>
            <person name="Kobatake N."/>
            <person name="Inagaki H."/>
            <person name="Ikema Y."/>
            <person name="Okamoto S."/>
            <person name="Okitani R."/>
            <person name="Kawakami T."/>
            <person name="Noguchi S."/>
            <person name="Itoh T."/>
            <person name="Shigeta K."/>
            <person name="Senba T."/>
            <person name="Matsumura K."/>
            <person name="Nakajima Y."/>
            <person name="Mizuno T."/>
            <person name="Morinaga M."/>
            <person name="Sasaki M."/>
            <person name="Togashi T."/>
            <person name="Oyama M."/>
            <person name="Hata H."/>
            <person name="Watanabe M."/>
            <person name="Komatsu T."/>
            <person name="Mizushima-Sugano J."/>
            <person name="Satoh T."/>
            <person name="Shirai Y."/>
            <person name="Takahashi Y."/>
            <person name="Nakagawa K."/>
            <person name="Okumura K."/>
            <person name="Nagase T."/>
            <person name="Nomura N."/>
            <person name="Kikuchi H."/>
            <person name="Masuho Y."/>
            <person name="Yamashita R."/>
            <person name="Nakai K."/>
            <person name="Yada T."/>
            <person name="Nakamura Y."/>
            <person name="Ohara O."/>
            <person name="Isogai T."/>
            <person name="Sugano S."/>
        </authorList>
    </citation>
    <scope>NUCLEOTIDE SEQUENCE [LARGE SCALE MRNA] (ISOFORM 2)</scope>
    <source>
        <tissue>Testis</tissue>
    </source>
</reference>
<reference key="3">
    <citation type="journal article" date="2004" name="Nature">
        <title>The DNA sequence and comparative analysis of human chromosome 10.</title>
        <authorList>
            <person name="Deloukas P."/>
            <person name="Earthrowl M.E."/>
            <person name="Grafham D.V."/>
            <person name="Rubenfield M."/>
            <person name="French L."/>
            <person name="Steward C.A."/>
            <person name="Sims S.K."/>
            <person name="Jones M.C."/>
            <person name="Searle S."/>
            <person name="Scott C."/>
            <person name="Howe K."/>
            <person name="Hunt S.E."/>
            <person name="Andrews T.D."/>
            <person name="Gilbert J.G.R."/>
            <person name="Swarbreck D."/>
            <person name="Ashurst J.L."/>
            <person name="Taylor A."/>
            <person name="Battles J."/>
            <person name="Bird C.P."/>
            <person name="Ainscough R."/>
            <person name="Almeida J.P."/>
            <person name="Ashwell R.I.S."/>
            <person name="Ambrose K.D."/>
            <person name="Babbage A.K."/>
            <person name="Bagguley C.L."/>
            <person name="Bailey J."/>
            <person name="Banerjee R."/>
            <person name="Bates K."/>
            <person name="Beasley H."/>
            <person name="Bray-Allen S."/>
            <person name="Brown A.J."/>
            <person name="Brown J.Y."/>
            <person name="Burford D.C."/>
            <person name="Burrill W."/>
            <person name="Burton J."/>
            <person name="Cahill P."/>
            <person name="Camire D."/>
            <person name="Carter N.P."/>
            <person name="Chapman J.C."/>
            <person name="Clark S.Y."/>
            <person name="Clarke G."/>
            <person name="Clee C.M."/>
            <person name="Clegg S."/>
            <person name="Corby N."/>
            <person name="Coulson A."/>
            <person name="Dhami P."/>
            <person name="Dutta I."/>
            <person name="Dunn M."/>
            <person name="Faulkner L."/>
            <person name="Frankish A."/>
            <person name="Frankland J.A."/>
            <person name="Garner P."/>
            <person name="Garnett J."/>
            <person name="Gribble S."/>
            <person name="Griffiths C."/>
            <person name="Grocock R."/>
            <person name="Gustafson E."/>
            <person name="Hammond S."/>
            <person name="Harley J.L."/>
            <person name="Hart E."/>
            <person name="Heath P.D."/>
            <person name="Ho T.P."/>
            <person name="Hopkins B."/>
            <person name="Horne J."/>
            <person name="Howden P.J."/>
            <person name="Huckle E."/>
            <person name="Hynds C."/>
            <person name="Johnson C."/>
            <person name="Johnson D."/>
            <person name="Kana A."/>
            <person name="Kay M."/>
            <person name="Kimberley A.M."/>
            <person name="Kershaw J.K."/>
            <person name="Kokkinaki M."/>
            <person name="Laird G.K."/>
            <person name="Lawlor S."/>
            <person name="Lee H.M."/>
            <person name="Leongamornlert D.A."/>
            <person name="Laird G."/>
            <person name="Lloyd C."/>
            <person name="Lloyd D.M."/>
            <person name="Loveland J."/>
            <person name="Lovell J."/>
            <person name="McLaren S."/>
            <person name="McLay K.E."/>
            <person name="McMurray A."/>
            <person name="Mashreghi-Mohammadi M."/>
            <person name="Matthews L."/>
            <person name="Milne S."/>
            <person name="Nickerson T."/>
            <person name="Nguyen M."/>
            <person name="Overton-Larty E."/>
            <person name="Palmer S.A."/>
            <person name="Pearce A.V."/>
            <person name="Peck A.I."/>
            <person name="Pelan S."/>
            <person name="Phillimore B."/>
            <person name="Porter K."/>
            <person name="Rice C.M."/>
            <person name="Rogosin A."/>
            <person name="Ross M.T."/>
            <person name="Sarafidou T."/>
            <person name="Sehra H.K."/>
            <person name="Shownkeen R."/>
            <person name="Skuce C.D."/>
            <person name="Smith M."/>
            <person name="Standring L."/>
            <person name="Sycamore N."/>
            <person name="Tester J."/>
            <person name="Thorpe A."/>
            <person name="Torcasso W."/>
            <person name="Tracey A."/>
            <person name="Tromans A."/>
            <person name="Tsolas J."/>
            <person name="Wall M."/>
            <person name="Walsh J."/>
            <person name="Wang H."/>
            <person name="Weinstock K."/>
            <person name="West A.P."/>
            <person name="Willey D.L."/>
            <person name="Whitehead S.L."/>
            <person name="Wilming L."/>
            <person name="Wray P.W."/>
            <person name="Young L."/>
            <person name="Chen Y."/>
            <person name="Lovering R.C."/>
            <person name="Moschonas N.K."/>
            <person name="Siebert R."/>
            <person name="Fechtel K."/>
            <person name="Bentley D."/>
            <person name="Durbin R.M."/>
            <person name="Hubbard T."/>
            <person name="Doucette-Stamm L."/>
            <person name="Beck S."/>
            <person name="Smith D.R."/>
            <person name="Rogers J."/>
        </authorList>
    </citation>
    <scope>NUCLEOTIDE SEQUENCE [LARGE SCALE GENOMIC DNA]</scope>
</reference>
<reference key="4">
    <citation type="submission" date="2005-09" db="EMBL/GenBank/DDBJ databases">
        <authorList>
            <person name="Mural R.J."/>
            <person name="Istrail S."/>
            <person name="Sutton G.G."/>
            <person name="Florea L."/>
            <person name="Halpern A.L."/>
            <person name="Mobarry C.M."/>
            <person name="Lippert R."/>
            <person name="Walenz B."/>
            <person name="Shatkay H."/>
            <person name="Dew I."/>
            <person name="Miller J.R."/>
            <person name="Flanigan M.J."/>
            <person name="Edwards N.J."/>
            <person name="Bolanos R."/>
            <person name="Fasulo D."/>
            <person name="Halldorsson B.V."/>
            <person name="Hannenhalli S."/>
            <person name="Turner R."/>
            <person name="Yooseph S."/>
            <person name="Lu F."/>
            <person name="Nusskern D.R."/>
            <person name="Shue B.C."/>
            <person name="Zheng X.H."/>
            <person name="Zhong F."/>
            <person name="Delcher A.L."/>
            <person name="Huson D.H."/>
            <person name="Kravitz S.A."/>
            <person name="Mouchard L."/>
            <person name="Reinert K."/>
            <person name="Remington K.A."/>
            <person name="Clark A.G."/>
            <person name="Waterman M.S."/>
            <person name="Eichler E.E."/>
            <person name="Adams M.D."/>
            <person name="Hunkapiller M.W."/>
            <person name="Myers E.W."/>
            <person name="Venter J.C."/>
        </authorList>
    </citation>
    <scope>NUCLEOTIDE SEQUENCE [LARGE SCALE GENOMIC DNA]</scope>
</reference>
<reference key="5">
    <citation type="journal article" date="2004" name="Genome Res.">
        <title>The status, quality, and expansion of the NIH full-length cDNA project: the Mammalian Gene Collection (MGC).</title>
        <authorList>
            <consortium name="The MGC Project Team"/>
        </authorList>
    </citation>
    <scope>NUCLEOTIDE SEQUENCE [LARGE SCALE MRNA] (ISOFORM 1)</scope>
    <scope>VARIANTS ASP-132 AND ARG-183</scope>
    <source>
        <tissue>Brain</tissue>
    </source>
</reference>
<reference key="6">
    <citation type="journal article" date="2014" name="J. Clin. Endocrinol. Metab.">
        <title>Exome sequencing reveals SYCE1 mutation associated with autosomal recessive primary ovarian insufficiency.</title>
        <authorList>
            <person name="de Vries L."/>
            <person name="Behar D.M."/>
            <person name="Smirin-Yosef P."/>
            <person name="Lagovsky I."/>
            <person name="Tzur S."/>
            <person name="Basel-Vanagaite L."/>
        </authorList>
    </citation>
    <scope>INVOLVEMENT IN POF12</scope>
</reference>
<reference key="7">
    <citation type="journal article" date="2015" name="J. Assist. Reprod. Genet.">
        <title>Deleterious mutation in SYCE1 is associated with non-obstructive azoospermia.</title>
        <authorList>
            <person name="Maor-Sagie E."/>
            <person name="Cinnamon Y."/>
            <person name="Yaacov B."/>
            <person name="Shaag A."/>
            <person name="Goldsmidt H."/>
            <person name="Zenvirt S."/>
            <person name="Laufer N."/>
            <person name="Richler C."/>
            <person name="Frumkin A."/>
        </authorList>
    </citation>
    <scope>INVOLVEMENT IN SPGF15</scope>
</reference>
<keyword id="KW-0025">Alternative splicing</keyword>
<keyword id="KW-0131">Cell cycle</keyword>
<keyword id="KW-0132">Cell division</keyword>
<keyword id="KW-0158">Chromosome</keyword>
<keyword id="KW-0175">Coiled coil</keyword>
<keyword id="KW-0469">Meiosis</keyword>
<keyword id="KW-0539">Nucleus</keyword>
<keyword id="KW-1066">Premature ovarian failure</keyword>
<keyword id="KW-1267">Proteomics identification</keyword>
<keyword id="KW-1185">Reference proteome</keyword>
<evidence type="ECO:0000250" key="1">
    <source>
        <dbReference type="UniProtKB" id="Q9D495"/>
    </source>
</evidence>
<evidence type="ECO:0000255" key="2"/>
<evidence type="ECO:0000256" key="3">
    <source>
        <dbReference type="SAM" id="MobiDB-lite"/>
    </source>
</evidence>
<evidence type="ECO:0000269" key="4">
    <source>
    </source>
</evidence>
<evidence type="ECO:0000269" key="5">
    <source>
    </source>
</evidence>
<evidence type="ECO:0000269" key="6">
    <source>
    </source>
</evidence>
<evidence type="ECO:0000303" key="7">
    <source>
    </source>
</evidence>
<evidence type="ECO:0000303" key="8">
    <source>
    </source>
</evidence>
<evidence type="ECO:0000305" key="9"/>